<feature type="chain" id="PRO_0000069011" description="Adenosine receptor A3">
    <location>
        <begin position="1"/>
        <end position="319"/>
    </location>
</feature>
<feature type="topological domain" description="Extracellular" evidence="1">
    <location>
        <begin position="1"/>
        <end position="15"/>
    </location>
</feature>
<feature type="transmembrane region" description="Helical; Name=1" evidence="1">
    <location>
        <begin position="16"/>
        <end position="38"/>
    </location>
</feature>
<feature type="topological domain" description="Cytoplasmic" evidence="1">
    <location>
        <begin position="39"/>
        <end position="49"/>
    </location>
</feature>
<feature type="transmembrane region" description="Helical; Name=2" evidence="1">
    <location>
        <begin position="50"/>
        <end position="73"/>
    </location>
</feature>
<feature type="topological domain" description="Extracellular" evidence="1">
    <location>
        <begin position="74"/>
        <end position="85"/>
    </location>
</feature>
<feature type="transmembrane region" description="Helical; Name=3" evidence="1">
    <location>
        <begin position="86"/>
        <end position="107"/>
    </location>
</feature>
<feature type="topological domain" description="Cytoplasmic" evidence="1">
    <location>
        <begin position="108"/>
        <end position="127"/>
    </location>
</feature>
<feature type="transmembrane region" description="Helical; Name=4" evidence="1">
    <location>
        <begin position="128"/>
        <end position="149"/>
    </location>
</feature>
<feature type="topological domain" description="Extracellular" evidence="1">
    <location>
        <begin position="150"/>
        <end position="178"/>
    </location>
</feature>
<feature type="transmembrane region" description="Helical; Name=5" evidence="1">
    <location>
        <begin position="179"/>
        <end position="199"/>
    </location>
</feature>
<feature type="topological domain" description="Cytoplasmic" evidence="1">
    <location>
        <begin position="200"/>
        <end position="232"/>
    </location>
</feature>
<feature type="transmembrane region" description="Helical; Name=6" evidence="1">
    <location>
        <begin position="233"/>
        <end position="256"/>
    </location>
</feature>
<feature type="topological domain" description="Extracellular" evidence="1">
    <location>
        <begin position="257"/>
        <end position="262"/>
    </location>
</feature>
<feature type="transmembrane region" description="Helical; Name=7" evidence="1">
    <location>
        <begin position="263"/>
        <end position="285"/>
    </location>
</feature>
<feature type="topological domain" description="Cytoplasmic" evidence="1">
    <location>
        <begin position="286"/>
        <end position="319"/>
    </location>
</feature>
<feature type="lipid moiety-binding region" description="S-palmitoyl cysteine" evidence="5">
    <location>
        <position position="304"/>
    </location>
</feature>
<feature type="glycosylation site" description="N-linked (GlcNAc...) asparagine" evidence="5">
    <location>
        <position position="5"/>
    </location>
</feature>
<feature type="glycosylation site" description="N-linked (GlcNAc...) asparagine" evidence="5">
    <location>
        <position position="13"/>
    </location>
</feature>
<feature type="glycosylation site" description="N-linked (GlcNAc...) asparagine" evidence="5">
    <location>
        <position position="161"/>
    </location>
</feature>
<feature type="disulfide bond" evidence="6">
    <location>
        <begin position="84"/>
        <end position="167"/>
    </location>
</feature>
<feature type="sequence conflict" description="In Ref. 2; AAA16851." evidence="7" ref="2">
    <original>I</original>
    <variation>V</variation>
    <location>
        <position position="184"/>
    </location>
</feature>
<feature type="sequence conflict" description="In Ref. 2; AAA16851." evidence="7" ref="2">
    <original>I</original>
    <variation>V</variation>
    <location>
        <position position="196"/>
    </location>
</feature>
<feature type="sequence conflict" description="In Ref. 2; AAA16851." evidence="7" ref="2">
    <original>T</original>
    <variation>S</variation>
    <location>
        <position position="214"/>
    </location>
</feature>
<accession>Q61618</accession>
<accession>Q9R202</accession>
<gene>
    <name type="primary">Adora3</name>
    <name type="synonym">Gpcr2</name>
</gene>
<sequence length="319" mass="36449">MEADNTTETDWLNITYITMEAAIGLCAVVGNMLVIWVVKLNPTLRTTTVYFIVSLALADIAVGVLVIPLAIAVSLQVKMHFYACLFMSCVLLIFTHASIMSLLAIAVHRYLRVKLTVRYRTVTTQRRIWLFLGLCWLVSFLVGLTPMFGWNRKATLASSQNSSTLLCHFRSVVSLDYMVFFSFITWILVPLVVMCIIYLDIFYIIRNKLSQNLTGFRETRAFYGREFKTAKSLFLVLFLFALCWLPLSIINFVSYFDVKIPDVAMCLGILLSHANSMMNPIVYACKIKKFKETYFLILRAVRLCQTSDSLDSNMEQTTE</sequence>
<organism>
    <name type="scientific">Mus musculus</name>
    <name type="common">Mouse</name>
    <dbReference type="NCBI Taxonomy" id="10090"/>
    <lineage>
        <taxon>Eukaryota</taxon>
        <taxon>Metazoa</taxon>
        <taxon>Chordata</taxon>
        <taxon>Craniata</taxon>
        <taxon>Vertebrata</taxon>
        <taxon>Euteleostomi</taxon>
        <taxon>Mammalia</taxon>
        <taxon>Eutheria</taxon>
        <taxon>Euarchontoglires</taxon>
        <taxon>Glires</taxon>
        <taxon>Rodentia</taxon>
        <taxon>Myomorpha</taxon>
        <taxon>Muroidea</taxon>
        <taxon>Muridae</taxon>
        <taxon>Murinae</taxon>
        <taxon>Mus</taxon>
        <taxon>Mus</taxon>
    </lineage>
</organism>
<protein>
    <recommendedName>
        <fullName>Adenosine receptor A3</fullName>
    </recommendedName>
    <alternativeName>
        <fullName>A3AR</fullName>
    </alternativeName>
</protein>
<evidence type="ECO:0000250" key="1"/>
<evidence type="ECO:0000250" key="2">
    <source>
        <dbReference type="UniProtKB" id="P0DMS8"/>
    </source>
</evidence>
<evidence type="ECO:0000250" key="3">
    <source>
        <dbReference type="UniProtKB" id="P28647"/>
    </source>
</evidence>
<evidence type="ECO:0000250" key="4">
    <source>
        <dbReference type="UniProtKB" id="Q28309"/>
    </source>
</evidence>
<evidence type="ECO:0000255" key="5"/>
<evidence type="ECO:0000255" key="6">
    <source>
        <dbReference type="PROSITE-ProRule" id="PRU00521"/>
    </source>
</evidence>
<evidence type="ECO:0000305" key="7"/>
<keyword id="KW-1003">Cell membrane</keyword>
<keyword id="KW-1015">Disulfide bond</keyword>
<keyword id="KW-0297">G-protein coupled receptor</keyword>
<keyword id="KW-0325">Glycoprotein</keyword>
<keyword id="KW-0449">Lipoprotein</keyword>
<keyword id="KW-0472">Membrane</keyword>
<keyword id="KW-0564">Palmitate</keyword>
<keyword id="KW-0597">Phosphoprotein</keyword>
<keyword id="KW-0675">Receptor</keyword>
<keyword id="KW-1185">Reference proteome</keyword>
<keyword id="KW-0807">Transducer</keyword>
<keyword id="KW-0812">Transmembrane</keyword>
<keyword id="KW-1133">Transmembrane helix</keyword>
<dbReference type="EMBL" id="AF069778">
    <property type="protein sequence ID" value="AAC82643.1"/>
    <property type="molecule type" value="Genomic_DNA"/>
</dbReference>
<dbReference type="EMBL" id="L20331">
    <property type="protein sequence ID" value="AAA16851.1"/>
    <property type="molecule type" value="mRNA"/>
</dbReference>
<dbReference type="CCDS" id="CCDS17712.1"/>
<dbReference type="PIR" id="B48909">
    <property type="entry name" value="B48909"/>
</dbReference>
<dbReference type="SMR" id="Q61618"/>
<dbReference type="CORUM" id="Q61618"/>
<dbReference type="FunCoup" id="Q61618">
    <property type="interactions" value="50"/>
</dbReference>
<dbReference type="STRING" id="10090.ENSMUSP00000000574"/>
<dbReference type="BindingDB" id="Q61618"/>
<dbReference type="ChEMBL" id="CHEMBL1075269"/>
<dbReference type="GuidetoPHARMACOLOGY" id="21"/>
<dbReference type="GlyCosmos" id="Q61618">
    <property type="glycosylation" value="3 sites, No reported glycans"/>
</dbReference>
<dbReference type="GlyGen" id="Q61618">
    <property type="glycosylation" value="3 sites"/>
</dbReference>
<dbReference type="iPTMnet" id="Q61618"/>
<dbReference type="PhosphoSitePlus" id="Q61618"/>
<dbReference type="PaxDb" id="10090-ENSMUSP00000000574"/>
<dbReference type="AGR" id="MGI:104847"/>
<dbReference type="MGI" id="MGI:104847">
    <property type="gene designation" value="Adora3"/>
</dbReference>
<dbReference type="eggNOG" id="KOG3656">
    <property type="taxonomic scope" value="Eukaryota"/>
</dbReference>
<dbReference type="InParanoid" id="Q61618"/>
<dbReference type="PhylomeDB" id="Q61618"/>
<dbReference type="Reactome" id="R-MMU-417973">
    <property type="pathway name" value="Adenosine P1 receptors"/>
</dbReference>
<dbReference type="Reactome" id="R-MMU-418594">
    <property type="pathway name" value="G alpha (i) signalling events"/>
</dbReference>
<dbReference type="PRO" id="PR:Q61618"/>
<dbReference type="Proteomes" id="UP000000589">
    <property type="component" value="Unplaced"/>
</dbReference>
<dbReference type="RNAct" id="Q61618">
    <property type="molecule type" value="protein"/>
</dbReference>
<dbReference type="GO" id="GO:0031594">
    <property type="term" value="C:neuromuscular junction"/>
    <property type="evidence" value="ECO:0000314"/>
    <property type="project" value="SynGO"/>
</dbReference>
<dbReference type="GO" id="GO:0005886">
    <property type="term" value="C:plasma membrane"/>
    <property type="evidence" value="ECO:0000314"/>
    <property type="project" value="MGI"/>
</dbReference>
<dbReference type="GO" id="GO:0045202">
    <property type="term" value="C:synapse"/>
    <property type="evidence" value="ECO:0000314"/>
    <property type="project" value="SynGO"/>
</dbReference>
<dbReference type="GO" id="GO:0001609">
    <property type="term" value="F:G protein-coupled adenosine receptor activity"/>
    <property type="evidence" value="ECO:0000314"/>
    <property type="project" value="MGI"/>
</dbReference>
<dbReference type="GO" id="GO:0019722">
    <property type="term" value="P:calcium-mediated signaling"/>
    <property type="evidence" value="ECO:0000314"/>
    <property type="project" value="MGI"/>
</dbReference>
<dbReference type="GO" id="GO:0001973">
    <property type="term" value="P:G protein-coupled adenosine receptor signaling pathway"/>
    <property type="evidence" value="ECO:0000315"/>
    <property type="project" value="MGI"/>
</dbReference>
<dbReference type="GO" id="GO:0002553">
    <property type="term" value="P:histamine secretion by mast cell"/>
    <property type="evidence" value="ECO:0000314"/>
    <property type="project" value="MGI"/>
</dbReference>
<dbReference type="GO" id="GO:0043303">
    <property type="term" value="P:mast cell degranulation"/>
    <property type="evidence" value="ECO:0000314"/>
    <property type="project" value="MGI"/>
</dbReference>
<dbReference type="GO" id="GO:0070254">
    <property type="term" value="P:mucus secretion"/>
    <property type="evidence" value="ECO:0000315"/>
    <property type="project" value="MGI"/>
</dbReference>
<dbReference type="GO" id="GO:0043491">
    <property type="term" value="P:phosphatidylinositol 3-kinase/protein kinase B signal transduction"/>
    <property type="evidence" value="ECO:0000314"/>
    <property type="project" value="MGI"/>
</dbReference>
<dbReference type="GO" id="GO:0050850">
    <property type="term" value="P:positive regulation of calcium-mediated signaling"/>
    <property type="evidence" value="ECO:0000314"/>
    <property type="project" value="MGI"/>
</dbReference>
<dbReference type="GO" id="GO:0050729">
    <property type="term" value="P:positive regulation of inflammatory response"/>
    <property type="evidence" value="ECO:0000315"/>
    <property type="project" value="MGI"/>
</dbReference>
<dbReference type="GO" id="GO:0002687">
    <property type="term" value="P:positive regulation of leukocyte migration"/>
    <property type="evidence" value="ECO:0000315"/>
    <property type="project" value="MGI"/>
</dbReference>
<dbReference type="GO" id="GO:0043306">
    <property type="term" value="P:positive regulation of mast cell degranulation"/>
    <property type="evidence" value="ECO:0000314"/>
    <property type="project" value="MGI"/>
</dbReference>
<dbReference type="GO" id="GO:0070257">
    <property type="term" value="P:positive regulation of mucus secretion"/>
    <property type="evidence" value="ECO:0000315"/>
    <property type="project" value="MGI"/>
</dbReference>
<dbReference type="GO" id="GO:0051897">
    <property type="term" value="P:positive regulation of phosphatidylinositol 3-kinase/protein kinase B signal transduction"/>
    <property type="evidence" value="ECO:0000314"/>
    <property type="project" value="MGI"/>
</dbReference>
<dbReference type="CDD" id="cd15070">
    <property type="entry name" value="7tmA_Adenosine_R_A3"/>
    <property type="match status" value="1"/>
</dbReference>
<dbReference type="Gene3D" id="1.20.1070.10">
    <property type="entry name" value="Rhodopsin 7-helix transmembrane proteins"/>
    <property type="match status" value="1"/>
</dbReference>
<dbReference type="InterPro" id="IPR000466">
    <property type="entry name" value="Adeno_A3_rcpt"/>
</dbReference>
<dbReference type="InterPro" id="IPR001634">
    <property type="entry name" value="Adenosn_rcpt"/>
</dbReference>
<dbReference type="InterPro" id="IPR000276">
    <property type="entry name" value="GPCR_Rhodpsn"/>
</dbReference>
<dbReference type="InterPro" id="IPR017452">
    <property type="entry name" value="GPCR_Rhodpsn_7TM"/>
</dbReference>
<dbReference type="PANTHER" id="PTHR24246:SF2">
    <property type="entry name" value="ADENOSINE RECEPTOR A3"/>
    <property type="match status" value="1"/>
</dbReference>
<dbReference type="PANTHER" id="PTHR24246">
    <property type="entry name" value="OLFACTORY RECEPTOR AND ADENOSINE RECEPTOR"/>
    <property type="match status" value="1"/>
</dbReference>
<dbReference type="Pfam" id="PF00001">
    <property type="entry name" value="7tm_1"/>
    <property type="match status" value="1"/>
</dbReference>
<dbReference type="PRINTS" id="PR00555">
    <property type="entry name" value="ADENOSINEA3R"/>
</dbReference>
<dbReference type="PRINTS" id="PR00424">
    <property type="entry name" value="ADENOSINER"/>
</dbReference>
<dbReference type="PRINTS" id="PR00237">
    <property type="entry name" value="GPCRRHODOPSN"/>
</dbReference>
<dbReference type="SUPFAM" id="SSF81321">
    <property type="entry name" value="Family A G protein-coupled receptor-like"/>
    <property type="match status" value="1"/>
</dbReference>
<dbReference type="PROSITE" id="PS00237">
    <property type="entry name" value="G_PROTEIN_RECEP_F1_1"/>
    <property type="match status" value="1"/>
</dbReference>
<dbReference type="PROSITE" id="PS50262">
    <property type="entry name" value="G_PROTEIN_RECEP_F1_2"/>
    <property type="match status" value="1"/>
</dbReference>
<name>AA3R_MOUSE</name>
<reference key="1">
    <citation type="journal article" date="1999" name="Genomics">
        <title>Characterization of the mouse A3 adenosine receptor gene: exon/intron organization and promoter activity.</title>
        <authorList>
            <person name="Zhao Z."/>
            <person name="Francis C."/>
            <person name="Ravid K."/>
        </authorList>
    </citation>
    <scope>NUCLEOTIDE SEQUENCE [GENOMIC DNA]</scope>
</reference>
<reference key="2">
    <citation type="journal article" date="1993" name="Genomics">
        <title>Identification, chromosomal location, and genome organization of mammalian G-protein-coupled receptors.</title>
        <authorList>
            <person name="Wilkie T.M."/>
            <person name="Chen Y."/>
            <person name="Gilbert D.J."/>
            <person name="Moore K.J."/>
            <person name="Yu L."/>
            <person name="Simon M.I."/>
            <person name="Copeland N.G."/>
            <person name="Jenkins N.A."/>
        </authorList>
    </citation>
    <scope>NUCLEOTIDE SEQUENCE [MRNA] OF 111-239</scope>
    <source>
        <tissue>Testis</tissue>
    </source>
</reference>
<comment type="function">
    <text evidence="2">Receptor for adenosine. The activity of this receptor is mediated by G proteins which inhibits adenylyl cyclase.</text>
</comment>
<comment type="subcellular location">
    <subcellularLocation>
        <location evidence="4">Cell membrane</location>
        <topology evidence="5">Multi-pass membrane protein</topology>
    </subcellularLocation>
</comment>
<comment type="PTM">
    <text evidence="3">Phosphorylation on Thr-317 and Thr-318 may be crucial for rapid desensitization. Phosphorylation on Thr-317 may be necessary for phosphorylation on Thr-318 to occur.</text>
</comment>
<comment type="similarity">
    <text evidence="6">Belongs to the G-protein coupled receptor 1 family.</text>
</comment>
<proteinExistence type="evidence at transcript level"/>